<gene>
    <name evidence="1" type="primary">queE</name>
    <name type="ordered locus">AF_0441</name>
</gene>
<keyword id="KW-0004">4Fe-4S</keyword>
<keyword id="KW-0408">Iron</keyword>
<keyword id="KW-0411">Iron-sulfur</keyword>
<keyword id="KW-0456">Lyase</keyword>
<keyword id="KW-0460">Magnesium</keyword>
<keyword id="KW-0479">Metal-binding</keyword>
<keyword id="KW-1185">Reference proteome</keyword>
<keyword id="KW-0949">S-adenosyl-L-methionine</keyword>
<evidence type="ECO:0000255" key="1">
    <source>
        <dbReference type="HAMAP-Rule" id="MF_00917"/>
    </source>
</evidence>
<evidence type="ECO:0000255" key="2">
    <source>
        <dbReference type="PROSITE-ProRule" id="PRU01266"/>
    </source>
</evidence>
<comment type="function">
    <text evidence="1">Catalyzes the complex heterocyclic radical-mediated conversion of 6-carboxy-5,6,7,8-tetrahydropterin (CPH4) to 7-carboxy-7-deazaguanine (CDG), a step common to the biosynthetic pathways of all 7-deazapurine-containing compounds.</text>
</comment>
<comment type="catalytic activity">
    <reaction evidence="1">
        <text>6-carboxy-5,6,7,8-tetrahydropterin + H(+) = 7-carboxy-7-deazaguanine + NH4(+)</text>
        <dbReference type="Rhea" id="RHEA:27974"/>
        <dbReference type="ChEBI" id="CHEBI:15378"/>
        <dbReference type="ChEBI" id="CHEBI:28938"/>
        <dbReference type="ChEBI" id="CHEBI:61032"/>
        <dbReference type="ChEBI" id="CHEBI:61036"/>
        <dbReference type="EC" id="4.3.99.3"/>
    </reaction>
</comment>
<comment type="cofactor">
    <cofactor evidence="1">
        <name>[4Fe-4S] cluster</name>
        <dbReference type="ChEBI" id="CHEBI:49883"/>
    </cofactor>
    <text evidence="1">Binds 1 [4Fe-4S] cluster. The cluster is coordinated with 3 cysteines and an exchangeable S-adenosyl-L-methionine.</text>
</comment>
<comment type="cofactor">
    <cofactor evidence="1">
        <name>S-adenosyl-L-methionine</name>
        <dbReference type="ChEBI" id="CHEBI:59789"/>
    </cofactor>
    <text evidence="1">Binds 1 S-adenosyl-L-methionine per subunit.</text>
</comment>
<comment type="cofactor">
    <cofactor evidence="1">
        <name>Mg(2+)</name>
        <dbReference type="ChEBI" id="CHEBI:18420"/>
    </cofactor>
</comment>
<comment type="pathway">
    <text evidence="1">Purine metabolism; 7-cyano-7-deazaguanine biosynthesis.</text>
</comment>
<comment type="subunit">
    <text evidence="1">Homodimer.</text>
</comment>
<comment type="similarity">
    <text evidence="1">Belongs to the radical SAM superfamily. 7-carboxy-7-deazaguanine synthase family.</text>
</comment>
<name>QUEE_ARCFU</name>
<protein>
    <recommendedName>
        <fullName evidence="1">7-carboxy-7-deazaguanine synthase</fullName>
        <shortName evidence="1">CDG synthase</shortName>
        <ecNumber evidence="1">4.3.99.3</ecNumber>
    </recommendedName>
    <alternativeName>
        <fullName evidence="1">Archaeosine biosynthesis protein QueE</fullName>
    </alternativeName>
</protein>
<feature type="chain" id="PRO_0000416215" description="7-carboxy-7-deazaguanine synthase">
    <location>
        <begin position="1"/>
        <end position="225"/>
    </location>
</feature>
<feature type="domain" description="Radical SAM core" evidence="2">
    <location>
        <begin position="18"/>
        <end position="225"/>
    </location>
</feature>
<feature type="binding site" evidence="1">
    <location>
        <begin position="12"/>
        <end position="14"/>
    </location>
    <ligand>
        <name>substrate</name>
    </ligand>
</feature>
<feature type="binding site" evidence="1">
    <location>
        <position position="27"/>
    </location>
    <ligand>
        <name>substrate</name>
    </ligand>
</feature>
<feature type="binding site" evidence="1">
    <location>
        <position position="31"/>
    </location>
    <ligand>
        <name>[4Fe-4S] cluster</name>
        <dbReference type="ChEBI" id="CHEBI:49883"/>
        <note>4Fe-4S-S-AdoMet</note>
    </ligand>
</feature>
<feature type="binding site" evidence="1">
    <location>
        <position position="35"/>
    </location>
    <ligand>
        <name>[4Fe-4S] cluster</name>
        <dbReference type="ChEBI" id="CHEBI:49883"/>
        <note>4Fe-4S-S-AdoMet</note>
    </ligand>
</feature>
<feature type="binding site" evidence="1">
    <location>
        <position position="38"/>
    </location>
    <ligand>
        <name>[4Fe-4S] cluster</name>
        <dbReference type="ChEBI" id="CHEBI:49883"/>
        <note>4Fe-4S-S-AdoMet</note>
    </ligand>
</feature>
<feature type="binding site" evidence="1">
    <location>
        <position position="40"/>
    </location>
    <ligand>
        <name>Mg(2+)</name>
        <dbReference type="ChEBI" id="CHEBI:18420"/>
    </ligand>
</feature>
<feature type="binding site" evidence="1">
    <location>
        <position position="80"/>
    </location>
    <ligand>
        <name>substrate</name>
    </ligand>
</feature>
<feature type="binding site" evidence="1">
    <location>
        <position position="82"/>
    </location>
    <ligand>
        <name>S-adenosyl-L-methionine</name>
        <dbReference type="ChEBI" id="CHEBI:59789"/>
    </ligand>
</feature>
<reference key="1">
    <citation type="journal article" date="1997" name="Nature">
        <title>The complete genome sequence of the hyperthermophilic, sulphate-reducing archaeon Archaeoglobus fulgidus.</title>
        <authorList>
            <person name="Klenk H.-P."/>
            <person name="Clayton R.A."/>
            <person name="Tomb J.-F."/>
            <person name="White O."/>
            <person name="Nelson K.E."/>
            <person name="Ketchum K.A."/>
            <person name="Dodson R.J."/>
            <person name="Gwinn M.L."/>
            <person name="Hickey E.K."/>
            <person name="Peterson J.D."/>
            <person name="Richardson D.L."/>
            <person name="Kerlavage A.R."/>
            <person name="Graham D.E."/>
            <person name="Kyrpides N.C."/>
            <person name="Fleischmann R.D."/>
            <person name="Quackenbush J."/>
            <person name="Lee N.H."/>
            <person name="Sutton G.G."/>
            <person name="Gill S.R."/>
            <person name="Kirkness E.F."/>
            <person name="Dougherty B.A."/>
            <person name="McKenney K."/>
            <person name="Adams M.D."/>
            <person name="Loftus B.J."/>
            <person name="Peterson S.N."/>
            <person name="Reich C.I."/>
            <person name="McNeil L.K."/>
            <person name="Badger J.H."/>
            <person name="Glodek A."/>
            <person name="Zhou L."/>
            <person name="Overbeek R."/>
            <person name="Gocayne J.D."/>
            <person name="Weidman J.F."/>
            <person name="McDonald L.A."/>
            <person name="Utterback T.R."/>
            <person name="Cotton M.D."/>
            <person name="Spriggs T."/>
            <person name="Artiach P."/>
            <person name="Kaine B.P."/>
            <person name="Sykes S.M."/>
            <person name="Sadow P.W."/>
            <person name="D'Andrea K.P."/>
            <person name="Bowman C."/>
            <person name="Fujii C."/>
            <person name="Garland S.A."/>
            <person name="Mason T.M."/>
            <person name="Olsen G.J."/>
            <person name="Fraser C.M."/>
            <person name="Smith H.O."/>
            <person name="Woese C.R."/>
            <person name="Venter J.C."/>
        </authorList>
    </citation>
    <scope>NUCLEOTIDE SEQUENCE [LARGE SCALE GENOMIC DNA]</scope>
    <source>
        <strain>ATCC 49558 / DSM 4304 / JCM 9628 / NBRC 100126 / VC-16</strain>
    </source>
</reference>
<dbReference type="EC" id="4.3.99.3" evidence="1"/>
<dbReference type="EMBL" id="AE000782">
    <property type="protein sequence ID" value="AAB90793.1"/>
    <property type="molecule type" value="Genomic_DNA"/>
</dbReference>
<dbReference type="PIR" id="A69305">
    <property type="entry name" value="A69305"/>
</dbReference>
<dbReference type="RefSeq" id="WP_010877948.1">
    <property type="nucleotide sequence ID" value="NC_000917.1"/>
</dbReference>
<dbReference type="SMR" id="O29808"/>
<dbReference type="STRING" id="224325.AF_0441"/>
<dbReference type="PaxDb" id="224325-AF_0441"/>
<dbReference type="DNASU" id="1483657"/>
<dbReference type="EnsemblBacteria" id="AAB90793">
    <property type="protein sequence ID" value="AAB90793"/>
    <property type="gene ID" value="AF_0441"/>
</dbReference>
<dbReference type="KEGG" id="afu:AF_0441"/>
<dbReference type="eggNOG" id="arCOG02173">
    <property type="taxonomic scope" value="Archaea"/>
</dbReference>
<dbReference type="HOGENOM" id="CLU_066739_1_0_2"/>
<dbReference type="OrthoDB" id="7980at2157"/>
<dbReference type="PhylomeDB" id="O29808"/>
<dbReference type="UniPathway" id="UPA00391"/>
<dbReference type="Proteomes" id="UP000002199">
    <property type="component" value="Chromosome"/>
</dbReference>
<dbReference type="GO" id="GO:0051539">
    <property type="term" value="F:4 iron, 4 sulfur cluster binding"/>
    <property type="evidence" value="ECO:0007669"/>
    <property type="project" value="UniProtKB-UniRule"/>
</dbReference>
<dbReference type="GO" id="GO:0016840">
    <property type="term" value="F:carbon-nitrogen lyase activity"/>
    <property type="evidence" value="ECO:0007669"/>
    <property type="project" value="UniProtKB-UniRule"/>
</dbReference>
<dbReference type="GO" id="GO:0000287">
    <property type="term" value="F:magnesium ion binding"/>
    <property type="evidence" value="ECO:0007669"/>
    <property type="project" value="UniProtKB-UniRule"/>
</dbReference>
<dbReference type="GO" id="GO:1904047">
    <property type="term" value="F:S-adenosyl-L-methionine binding"/>
    <property type="evidence" value="ECO:0007669"/>
    <property type="project" value="UniProtKB-UniRule"/>
</dbReference>
<dbReference type="CDD" id="cd01335">
    <property type="entry name" value="Radical_SAM"/>
    <property type="match status" value="1"/>
</dbReference>
<dbReference type="Gene3D" id="3.20.20.70">
    <property type="entry name" value="Aldolase class I"/>
    <property type="match status" value="1"/>
</dbReference>
<dbReference type="HAMAP" id="MF_00917">
    <property type="entry name" value="QueE"/>
    <property type="match status" value="1"/>
</dbReference>
<dbReference type="InterPro" id="IPR024924">
    <property type="entry name" value="7-CO-7-deazaguanine_synth-like"/>
</dbReference>
<dbReference type="InterPro" id="IPR013785">
    <property type="entry name" value="Aldolase_TIM"/>
</dbReference>
<dbReference type="InterPro" id="IPR007197">
    <property type="entry name" value="rSAM"/>
</dbReference>
<dbReference type="PANTHER" id="PTHR42836">
    <property type="entry name" value="7-CARBOXY-7-DEAZAGUANINE SYNTHASE"/>
    <property type="match status" value="1"/>
</dbReference>
<dbReference type="PANTHER" id="PTHR42836:SF1">
    <property type="entry name" value="7-CARBOXY-7-DEAZAGUANINE SYNTHASE"/>
    <property type="match status" value="1"/>
</dbReference>
<dbReference type="Pfam" id="PF13353">
    <property type="entry name" value="Fer4_12"/>
    <property type="match status" value="1"/>
</dbReference>
<dbReference type="Pfam" id="PF04055">
    <property type="entry name" value="Radical_SAM"/>
    <property type="match status" value="1"/>
</dbReference>
<dbReference type="PIRSF" id="PIRSF000370">
    <property type="entry name" value="QueE"/>
    <property type="match status" value="1"/>
</dbReference>
<dbReference type="SFLD" id="SFLDS00029">
    <property type="entry name" value="Radical_SAM"/>
    <property type="match status" value="1"/>
</dbReference>
<dbReference type="SUPFAM" id="SSF102114">
    <property type="entry name" value="Radical SAM enzymes"/>
    <property type="match status" value="1"/>
</dbReference>
<dbReference type="PROSITE" id="PS51918">
    <property type="entry name" value="RADICAL_SAM"/>
    <property type="match status" value="1"/>
</dbReference>
<sequence length="225" mass="25873">MRANLIEIFESIQGEGFYIGVRQLFVRFAGCNLNCYYCDTPKTSENCLDLTANRTLKNPVSAEYVQGRIDSSKVHSVCFTGGEPMLQAEFIASLSKTHPFYLESNMTLPEKAKKLKFCDYVAGDLKVREAGLKNYDEVFQKTVKCFKVLRNTRRRKTFCKIVLPDKFDADEVLNSAYEIKNYVFGFVLQPVFGSRVEKILKLQKRMIDFADTRVIPQVHKYLGVR</sequence>
<organism>
    <name type="scientific">Archaeoglobus fulgidus (strain ATCC 49558 / DSM 4304 / JCM 9628 / NBRC 100126 / VC-16)</name>
    <dbReference type="NCBI Taxonomy" id="224325"/>
    <lineage>
        <taxon>Archaea</taxon>
        <taxon>Methanobacteriati</taxon>
        <taxon>Methanobacteriota</taxon>
        <taxon>Archaeoglobi</taxon>
        <taxon>Archaeoglobales</taxon>
        <taxon>Archaeoglobaceae</taxon>
        <taxon>Archaeoglobus</taxon>
    </lineage>
</organism>
<accession>O29808</accession>
<proteinExistence type="inferred from homology"/>